<proteinExistence type="evidence at transcript level"/>
<reference key="1">
    <citation type="submission" date="2005-11" db="EMBL/GenBank/DDBJ databases">
        <authorList>
            <consortium name="NIH - Mammalian Gene Collection (MGC) project"/>
        </authorList>
    </citation>
    <scope>NUCLEOTIDE SEQUENCE [LARGE SCALE MRNA]</scope>
    <source>
        <strain>Crossbred X Angus</strain>
        <tissue>Liver</tissue>
    </source>
</reference>
<dbReference type="EMBL" id="BC109952">
    <property type="protein sequence ID" value="AAI09953.1"/>
    <property type="molecule type" value="mRNA"/>
</dbReference>
<dbReference type="RefSeq" id="NP_001033231.1">
    <property type="nucleotide sequence ID" value="NM_001038142.2"/>
</dbReference>
<dbReference type="EMDB" id="EMD-50664"/>
<dbReference type="SMR" id="Q32KS2"/>
<dbReference type="FunCoup" id="Q32KS2">
    <property type="interactions" value="364"/>
</dbReference>
<dbReference type="STRING" id="9913.ENSBTAP00000011254"/>
<dbReference type="PaxDb" id="9913-ENSBTAP00000011254"/>
<dbReference type="GeneID" id="524709"/>
<dbReference type="KEGG" id="bta:524709"/>
<dbReference type="CTD" id="27019"/>
<dbReference type="VEuPathDB" id="HostDB:ENSBTAG00000008538"/>
<dbReference type="eggNOG" id="KOG1587">
    <property type="taxonomic scope" value="Eukaryota"/>
</dbReference>
<dbReference type="HOGENOM" id="CLU_015820_2_0_1"/>
<dbReference type="InParanoid" id="Q32KS2"/>
<dbReference type="OMA" id="VWEDMRA"/>
<dbReference type="OrthoDB" id="10261376at2759"/>
<dbReference type="TreeFam" id="TF300553"/>
<dbReference type="Proteomes" id="UP000009136">
    <property type="component" value="Chromosome 8"/>
</dbReference>
<dbReference type="Bgee" id="ENSBTAG00000008538">
    <property type="expression patterns" value="Expressed in olfactory segment of nasal mucosa and 54 other cell types or tissues"/>
</dbReference>
<dbReference type="GO" id="GO:0005874">
    <property type="term" value="C:microtubule"/>
    <property type="evidence" value="ECO:0007669"/>
    <property type="project" value="UniProtKB-KW"/>
</dbReference>
<dbReference type="GO" id="GO:0036157">
    <property type="term" value="C:outer dynein arm"/>
    <property type="evidence" value="ECO:0000318"/>
    <property type="project" value="GO_Central"/>
</dbReference>
<dbReference type="GO" id="GO:0045504">
    <property type="term" value="F:dynein heavy chain binding"/>
    <property type="evidence" value="ECO:0000318"/>
    <property type="project" value="GO_Central"/>
</dbReference>
<dbReference type="GO" id="GO:0045503">
    <property type="term" value="F:dynein light chain binding"/>
    <property type="evidence" value="ECO:0000318"/>
    <property type="project" value="GO_Central"/>
</dbReference>
<dbReference type="GO" id="GO:0003341">
    <property type="term" value="P:cilium movement"/>
    <property type="evidence" value="ECO:0000318"/>
    <property type="project" value="GO_Central"/>
</dbReference>
<dbReference type="GO" id="GO:0036158">
    <property type="term" value="P:outer dynein arm assembly"/>
    <property type="evidence" value="ECO:0000318"/>
    <property type="project" value="GO_Central"/>
</dbReference>
<dbReference type="FunFam" id="2.130.10.10:FF:000251">
    <property type="entry name" value="Dynein axonemal intermediate chain 1"/>
    <property type="match status" value="1"/>
</dbReference>
<dbReference type="FunFam" id="2.130.10.10:FF:000349">
    <property type="entry name" value="Dynein axonemal intermediate chain 1"/>
    <property type="match status" value="1"/>
</dbReference>
<dbReference type="Gene3D" id="2.130.10.10">
    <property type="entry name" value="YVTN repeat-like/Quinoprotein amine dehydrogenase"/>
    <property type="match status" value="2"/>
</dbReference>
<dbReference type="InterPro" id="IPR050687">
    <property type="entry name" value="Dynein_IC"/>
</dbReference>
<dbReference type="InterPro" id="IPR015943">
    <property type="entry name" value="WD40/YVTN_repeat-like_dom_sf"/>
</dbReference>
<dbReference type="InterPro" id="IPR036322">
    <property type="entry name" value="WD40_repeat_dom_sf"/>
</dbReference>
<dbReference type="InterPro" id="IPR001680">
    <property type="entry name" value="WD40_rpt"/>
</dbReference>
<dbReference type="PANTHER" id="PTHR12442:SF11">
    <property type="entry name" value="DYNEIN AXONEMAL INTERMEDIATE CHAIN 1"/>
    <property type="match status" value="1"/>
</dbReference>
<dbReference type="PANTHER" id="PTHR12442">
    <property type="entry name" value="DYNEIN INTERMEDIATE CHAIN"/>
    <property type="match status" value="1"/>
</dbReference>
<dbReference type="Pfam" id="PF00400">
    <property type="entry name" value="WD40"/>
    <property type="match status" value="2"/>
</dbReference>
<dbReference type="SMART" id="SM00320">
    <property type="entry name" value="WD40"/>
    <property type="match status" value="4"/>
</dbReference>
<dbReference type="SUPFAM" id="SSF50978">
    <property type="entry name" value="WD40 repeat-like"/>
    <property type="match status" value="1"/>
</dbReference>
<dbReference type="PROSITE" id="PS50082">
    <property type="entry name" value="WD_REPEATS_2"/>
    <property type="match status" value="1"/>
</dbReference>
<dbReference type="PROSITE" id="PS50294">
    <property type="entry name" value="WD_REPEATS_REGION"/>
    <property type="match status" value="1"/>
</dbReference>
<feature type="chain" id="PRO_0000254654" description="Dynein axonemal intermediate chain 1">
    <location>
        <begin position="1"/>
        <end position="702"/>
    </location>
</feature>
<feature type="repeat" description="WD 1">
    <location>
        <begin position="383"/>
        <end position="423"/>
    </location>
</feature>
<feature type="repeat" description="WD 2">
    <location>
        <begin position="432"/>
        <end position="475"/>
    </location>
</feature>
<feature type="repeat" description="WD 3">
    <location>
        <begin position="540"/>
        <end position="580"/>
    </location>
</feature>
<feature type="repeat" description="WD 4">
    <location>
        <begin position="582"/>
        <end position="622"/>
    </location>
</feature>
<feature type="repeat" description="WD 5">
    <location>
        <begin position="630"/>
        <end position="669"/>
    </location>
</feature>
<feature type="region of interest" description="Disordered" evidence="4">
    <location>
        <begin position="1"/>
        <end position="58"/>
    </location>
</feature>
<feature type="modified residue" description="Phosphoserine" evidence="3">
    <location>
        <position position="134"/>
    </location>
</feature>
<feature type="modified residue" description="Phosphoserine" evidence="3">
    <location>
        <position position="137"/>
    </location>
</feature>
<organism>
    <name type="scientific">Bos taurus</name>
    <name type="common">Bovine</name>
    <dbReference type="NCBI Taxonomy" id="9913"/>
    <lineage>
        <taxon>Eukaryota</taxon>
        <taxon>Metazoa</taxon>
        <taxon>Chordata</taxon>
        <taxon>Craniata</taxon>
        <taxon>Vertebrata</taxon>
        <taxon>Euteleostomi</taxon>
        <taxon>Mammalia</taxon>
        <taxon>Eutheria</taxon>
        <taxon>Laurasiatheria</taxon>
        <taxon>Artiodactyla</taxon>
        <taxon>Ruminantia</taxon>
        <taxon>Pecora</taxon>
        <taxon>Bovidae</taxon>
        <taxon>Bovinae</taxon>
        <taxon>Bos</taxon>
    </lineage>
</organism>
<comment type="function">
    <text evidence="1">Part of the dynein complex of respiratory cilia.</text>
</comment>
<comment type="subunit">
    <text evidence="2 3">Consists of at least two heavy chains and a number of intermediate and light chains. Interacts with BICD2 (By similarity). Interacts with CFAP45 and CFAP52 (By similarity). Interacts with CFAP53 (By similarity).</text>
</comment>
<comment type="subcellular location">
    <subcellularLocation>
        <location evidence="3">Cytoplasm</location>
        <location evidence="3">Cytoskeleton</location>
        <location evidence="3">Cilium axoneme</location>
    </subcellularLocation>
</comment>
<comment type="similarity">
    <text evidence="5">Belongs to the dynein intermediate chain family.</text>
</comment>
<protein>
    <recommendedName>
        <fullName>Dynein axonemal intermediate chain 1</fullName>
    </recommendedName>
    <alternativeName>
        <fullName>Axonemal dynein intermediate chain 1</fullName>
    </alternativeName>
</protein>
<sequence length="702" mass="79894">MLPASSKMPHKQPPPPRKQSISMGRGARKRDEDSGTEVGEGTDEWVQSKATVKPPDQLDLTDAELKEEFTRILTANNPHAPQNIVRYSFKEGTYKLIGFVDQLAVHFTQVGNLIPKDSDEGRRQHYRDELAASSQESAKVVISETEILEEEEEPKEVEAGSQTDVPIVEASEKMAEEELMTPKQPKERKLTNKFNFSERASQTFNNPLRDRECQMEPPPRTNFSATANQWEIYDAYMEELEKQEKTKEKEKTKTPVAKKMGKMAMRKMTSMESQSDDITKVTQAAKIVERMVNQNTYDDVAQDFKYYEDAADEYRDQEGTLLPLWKFQNDKAKRLAVTALCWNPKYNDLFAVGHGSYDFMKQSRGMLLLYSMKNPSFPEYIFSSESGIMCLDMHVDHPYLVVVGHYDGNVAIYNLKKPHSQPSFRSSAKSGKHTDPVWQVRWQKDDMDHNLNFFSVSSDGRIVSWTLVKSELVHTDVIKLKVEGSTTEGLEGLQIHTVGCGTAFDFHREIDYLFLVGTEEGKIYKCSKSYSSQFLDTYDAHNMAVDAVSWNPYHTKVFMSCSSDWTVKIWDHTIKTPMFIYDLNSAVGDVAWAPYSSTVFAAVTTNGKTHVFDLSINKYEAICNQPVVAKKKNKLTHVQFNPIHPIIIVGDDRGHVTCLKLSPNLRKMPKEKKGQEVQKGPAVEIAKLDKLLNLVREVKTKT</sequence>
<gene>
    <name type="primary">DNAI1</name>
</gene>
<keyword id="KW-0966">Cell projection</keyword>
<keyword id="KW-0963">Cytoplasm</keyword>
<keyword id="KW-0206">Cytoskeleton</keyword>
<keyword id="KW-0243">Dynein</keyword>
<keyword id="KW-0493">Microtubule</keyword>
<keyword id="KW-0505">Motor protein</keyword>
<keyword id="KW-0597">Phosphoprotein</keyword>
<keyword id="KW-1185">Reference proteome</keyword>
<keyword id="KW-0677">Repeat</keyword>
<keyword id="KW-0853">WD repeat</keyword>
<name>DNAI1_BOVIN</name>
<accession>Q32KS2</accession>
<evidence type="ECO:0000250" key="1"/>
<evidence type="ECO:0000250" key="2">
    <source>
        <dbReference type="UniProtKB" id="Q8C0M8"/>
    </source>
</evidence>
<evidence type="ECO:0000250" key="3">
    <source>
        <dbReference type="UniProtKB" id="Q9UI46"/>
    </source>
</evidence>
<evidence type="ECO:0000256" key="4">
    <source>
        <dbReference type="SAM" id="MobiDB-lite"/>
    </source>
</evidence>
<evidence type="ECO:0000305" key="5"/>